<gene>
    <name evidence="6" type="primary">dst3</name>
    <name type="synonym">dstC</name>
    <name type="ORF">DDB_G0291267</name>
</gene>
<name>DST3_DICDI</name>
<accession>Q54EY4</accession>
<organism>
    <name type="scientific">Dictyostelium discoideum</name>
    <name type="common">Social amoeba</name>
    <dbReference type="NCBI Taxonomy" id="44689"/>
    <lineage>
        <taxon>Eukaryota</taxon>
        <taxon>Amoebozoa</taxon>
        <taxon>Evosea</taxon>
        <taxon>Eumycetozoa</taxon>
        <taxon>Dictyostelia</taxon>
        <taxon>Dictyosteliales</taxon>
        <taxon>Dictyosteliaceae</taxon>
        <taxon>Dictyostelium</taxon>
    </lineage>
</organism>
<protein>
    <recommendedName>
        <fullName evidence="2">Serine/threonine-protein kinase dst3</fullName>
        <ecNumber>2.7.11.1</ecNumber>
    </recommendedName>
</protein>
<sequence length="562" mass="61799">MNSDSVENLFISRISKDDPEAIFQIVEVVGSGSFGTVCACRWMKKKDRESNGNRLIACKFVEVNADDVETNLNLVKEIDILKESMDCPYIVEYKGCYLKSSMLLIVMEYCKGGSLLDIIELCGKRLIEEEIAAVCAGVVKGLVYLHSKRTTHRDIKAGNVLLDEEGLPKLADFGVSTIAEQGQKMNTVIGSPYWMAPEIIMGQGYDQKADIWSLGITAIEIAELVPPRFDVPPSRVIFTIPHQPPPSLKIPSDWSPEFNDFVKQCLSMNPALRPSAQQLLSHPFILKGSSQQILQKLVNESIPLLKEKRAEKIRQLEEQEQQRNSSGSKMVSSVPTRASQALTNVRNAESLKGSVVILNSNTKTASIMRNKNPQPPPPSHSSGAGGAAGSTRRVPGNKSVLNRYPPANNVSNGTIAPSPINNNNNNNNTTTKVGKVSSPFLQQQQQQQQQNNNKNPPPKPTTPSPNKKIGDNISKTTPTTPTTTQPNTSTTTKTGSSLNIKPTNNVNRSTISIGQQKSPLQSSEREASYDEESVSVIYHGSEDEEDEEEFNHEDYEEINVNI</sequence>
<keyword id="KW-0067">ATP-binding</keyword>
<keyword id="KW-0418">Kinase</keyword>
<keyword id="KW-0460">Magnesium</keyword>
<keyword id="KW-0479">Metal-binding</keyword>
<keyword id="KW-0547">Nucleotide-binding</keyword>
<keyword id="KW-1185">Reference proteome</keyword>
<keyword id="KW-0723">Serine/threonine-protein kinase</keyword>
<keyword id="KW-0808">Transferase</keyword>
<evidence type="ECO:0000250" key="1"/>
<evidence type="ECO:0000250" key="2">
    <source>
        <dbReference type="UniProtKB" id="O61125"/>
    </source>
</evidence>
<evidence type="ECO:0000250" key="3">
    <source>
        <dbReference type="UniProtKB" id="P28523"/>
    </source>
</evidence>
<evidence type="ECO:0000255" key="4">
    <source>
        <dbReference type="PROSITE-ProRule" id="PRU00159"/>
    </source>
</evidence>
<evidence type="ECO:0000256" key="5">
    <source>
        <dbReference type="SAM" id="MobiDB-lite"/>
    </source>
</evidence>
<evidence type="ECO:0000312" key="6">
    <source>
        <dbReference type="EMBL" id="EAL61617.1"/>
    </source>
</evidence>
<feature type="chain" id="PRO_0000352755" description="Serine/threonine-protein kinase dst3">
    <location>
        <begin position="1"/>
        <end position="562"/>
    </location>
</feature>
<feature type="domain" description="Protein kinase" evidence="4">
    <location>
        <begin position="23"/>
        <end position="285"/>
    </location>
</feature>
<feature type="region of interest" description="Disordered" evidence="5">
    <location>
        <begin position="316"/>
        <end position="339"/>
    </location>
</feature>
<feature type="region of interest" description="Disordered" evidence="5">
    <location>
        <begin position="366"/>
        <end position="562"/>
    </location>
</feature>
<feature type="compositionally biased region" description="Polar residues" evidence="5">
    <location>
        <begin position="322"/>
        <end position="339"/>
    </location>
</feature>
<feature type="compositionally biased region" description="Low complexity" evidence="5">
    <location>
        <begin position="421"/>
        <end position="431"/>
    </location>
</feature>
<feature type="compositionally biased region" description="Low complexity" evidence="5">
    <location>
        <begin position="442"/>
        <end position="454"/>
    </location>
</feature>
<feature type="compositionally biased region" description="Low complexity" evidence="5">
    <location>
        <begin position="476"/>
        <end position="494"/>
    </location>
</feature>
<feature type="compositionally biased region" description="Polar residues" evidence="5">
    <location>
        <begin position="495"/>
        <end position="522"/>
    </location>
</feature>
<feature type="compositionally biased region" description="Acidic residues" evidence="5">
    <location>
        <begin position="542"/>
        <end position="562"/>
    </location>
</feature>
<feature type="active site" description="Proton acceptor" evidence="3 4">
    <location>
        <position position="154"/>
    </location>
</feature>
<feature type="binding site" evidence="3 4">
    <location>
        <begin position="29"/>
        <end position="37"/>
    </location>
    <ligand>
        <name>ATP</name>
        <dbReference type="ChEBI" id="CHEBI:30616"/>
    </ligand>
</feature>
<feature type="binding site" evidence="3 4">
    <location>
        <position position="59"/>
    </location>
    <ligand>
        <name>ATP</name>
        <dbReference type="ChEBI" id="CHEBI:30616"/>
    </ligand>
</feature>
<reference key="1">
    <citation type="journal article" date="2005" name="Nature">
        <title>The genome of the social amoeba Dictyostelium discoideum.</title>
        <authorList>
            <person name="Eichinger L."/>
            <person name="Pachebat J.A."/>
            <person name="Gloeckner G."/>
            <person name="Rajandream M.A."/>
            <person name="Sucgang R."/>
            <person name="Berriman M."/>
            <person name="Song J."/>
            <person name="Olsen R."/>
            <person name="Szafranski K."/>
            <person name="Xu Q."/>
            <person name="Tunggal B."/>
            <person name="Kummerfeld S."/>
            <person name="Madera M."/>
            <person name="Konfortov B.A."/>
            <person name="Rivero F."/>
            <person name="Bankier A.T."/>
            <person name="Lehmann R."/>
            <person name="Hamlin N."/>
            <person name="Davies R."/>
            <person name="Gaudet P."/>
            <person name="Fey P."/>
            <person name="Pilcher K."/>
            <person name="Chen G."/>
            <person name="Saunders D."/>
            <person name="Sodergren E.J."/>
            <person name="Davis P."/>
            <person name="Kerhornou A."/>
            <person name="Nie X."/>
            <person name="Hall N."/>
            <person name="Anjard C."/>
            <person name="Hemphill L."/>
            <person name="Bason N."/>
            <person name="Farbrother P."/>
            <person name="Desany B."/>
            <person name="Just E."/>
            <person name="Morio T."/>
            <person name="Rost R."/>
            <person name="Churcher C.M."/>
            <person name="Cooper J."/>
            <person name="Haydock S."/>
            <person name="van Driessche N."/>
            <person name="Cronin A."/>
            <person name="Goodhead I."/>
            <person name="Muzny D.M."/>
            <person name="Mourier T."/>
            <person name="Pain A."/>
            <person name="Lu M."/>
            <person name="Harper D."/>
            <person name="Lindsay R."/>
            <person name="Hauser H."/>
            <person name="James K.D."/>
            <person name="Quiles M."/>
            <person name="Madan Babu M."/>
            <person name="Saito T."/>
            <person name="Buchrieser C."/>
            <person name="Wardroper A."/>
            <person name="Felder M."/>
            <person name="Thangavelu M."/>
            <person name="Johnson D."/>
            <person name="Knights A."/>
            <person name="Loulseged H."/>
            <person name="Mungall K.L."/>
            <person name="Oliver K."/>
            <person name="Price C."/>
            <person name="Quail M.A."/>
            <person name="Urushihara H."/>
            <person name="Hernandez J."/>
            <person name="Rabbinowitsch E."/>
            <person name="Steffen D."/>
            <person name="Sanders M."/>
            <person name="Ma J."/>
            <person name="Kohara Y."/>
            <person name="Sharp S."/>
            <person name="Simmonds M.N."/>
            <person name="Spiegler S."/>
            <person name="Tivey A."/>
            <person name="Sugano S."/>
            <person name="White B."/>
            <person name="Walker D."/>
            <person name="Woodward J.R."/>
            <person name="Winckler T."/>
            <person name="Tanaka Y."/>
            <person name="Shaulsky G."/>
            <person name="Schleicher M."/>
            <person name="Weinstock G.M."/>
            <person name="Rosenthal A."/>
            <person name="Cox E.C."/>
            <person name="Chisholm R.L."/>
            <person name="Gibbs R.A."/>
            <person name="Loomis W.F."/>
            <person name="Platzer M."/>
            <person name="Kay R.R."/>
            <person name="Williams J.G."/>
            <person name="Dear P.H."/>
            <person name="Noegel A.A."/>
            <person name="Barrell B.G."/>
            <person name="Kuspa A."/>
        </authorList>
    </citation>
    <scope>NUCLEOTIDE SEQUENCE [LARGE SCALE GENOMIC DNA]</scope>
    <source>
        <strain>AX4</strain>
    </source>
</reference>
<reference key="2">
    <citation type="journal article" date="2006" name="Eur. J. Cell Biol.">
        <title>Characterization of the Ste20-like kinase Krs1 of Dictyostelium discoideum.</title>
        <authorList>
            <person name="Arasada R."/>
            <person name="Son H."/>
            <person name="Ramalingam N."/>
            <person name="Eichinger L."/>
            <person name="Schleicher M."/>
            <person name="Rohlfs M."/>
        </authorList>
    </citation>
    <scope>IDENTIFICATION</scope>
</reference>
<proteinExistence type="inferred from homology"/>
<dbReference type="EC" id="2.7.11.1"/>
<dbReference type="EMBL" id="AAFI02000177">
    <property type="protein sequence ID" value="EAL61617.1"/>
    <property type="molecule type" value="Genomic_DNA"/>
</dbReference>
<dbReference type="RefSeq" id="XP_635106.1">
    <property type="nucleotide sequence ID" value="XM_630014.1"/>
</dbReference>
<dbReference type="SMR" id="Q54EY4"/>
<dbReference type="FunCoup" id="Q54EY4">
    <property type="interactions" value="91"/>
</dbReference>
<dbReference type="PaxDb" id="44689-DDB0216379"/>
<dbReference type="EnsemblProtists" id="EAL61617">
    <property type="protein sequence ID" value="EAL61617"/>
    <property type="gene ID" value="DDB_G0291267"/>
</dbReference>
<dbReference type="GeneID" id="8628053"/>
<dbReference type="KEGG" id="ddi:DDB_G0291267"/>
<dbReference type="dictyBase" id="DDB_G0291267">
    <property type="gene designation" value="dst3"/>
</dbReference>
<dbReference type="VEuPathDB" id="AmoebaDB:DDB_G0291267"/>
<dbReference type="eggNOG" id="KOG0574">
    <property type="taxonomic scope" value="Eukaryota"/>
</dbReference>
<dbReference type="HOGENOM" id="CLU_485238_0_0_1"/>
<dbReference type="InParanoid" id="Q54EY4"/>
<dbReference type="OMA" id="CYLKSSM"/>
<dbReference type="PhylomeDB" id="Q54EY4"/>
<dbReference type="PRO" id="PR:Q54EY4"/>
<dbReference type="Proteomes" id="UP000002195">
    <property type="component" value="Chromosome 6"/>
</dbReference>
<dbReference type="GO" id="GO:0005737">
    <property type="term" value="C:cytoplasm"/>
    <property type="evidence" value="ECO:0000250"/>
    <property type="project" value="dictyBase"/>
</dbReference>
<dbReference type="GO" id="GO:0005634">
    <property type="term" value="C:nucleus"/>
    <property type="evidence" value="ECO:0000250"/>
    <property type="project" value="dictyBase"/>
</dbReference>
<dbReference type="GO" id="GO:0005524">
    <property type="term" value="F:ATP binding"/>
    <property type="evidence" value="ECO:0007669"/>
    <property type="project" value="UniProtKB-KW"/>
</dbReference>
<dbReference type="GO" id="GO:0046872">
    <property type="term" value="F:metal ion binding"/>
    <property type="evidence" value="ECO:0007669"/>
    <property type="project" value="UniProtKB-KW"/>
</dbReference>
<dbReference type="GO" id="GO:0106310">
    <property type="term" value="F:protein serine kinase activity"/>
    <property type="evidence" value="ECO:0007669"/>
    <property type="project" value="RHEA"/>
</dbReference>
<dbReference type="GO" id="GO:0004674">
    <property type="term" value="F:protein serine/threonine kinase activity"/>
    <property type="evidence" value="ECO:0000250"/>
    <property type="project" value="dictyBase"/>
</dbReference>
<dbReference type="GO" id="GO:0035556">
    <property type="term" value="P:intracellular signal transduction"/>
    <property type="evidence" value="ECO:0000318"/>
    <property type="project" value="GO_Central"/>
</dbReference>
<dbReference type="GO" id="GO:0090090">
    <property type="term" value="P:negative regulation of canonical Wnt signaling pathway"/>
    <property type="evidence" value="ECO:0000318"/>
    <property type="project" value="GO_Central"/>
</dbReference>
<dbReference type="GO" id="GO:0043065">
    <property type="term" value="P:positive regulation of apoptotic process"/>
    <property type="evidence" value="ECO:0000318"/>
    <property type="project" value="GO_Central"/>
</dbReference>
<dbReference type="GO" id="GO:0012501">
    <property type="term" value="P:programmed cell death"/>
    <property type="evidence" value="ECO:0000250"/>
    <property type="project" value="dictyBase"/>
</dbReference>
<dbReference type="GO" id="GO:0006468">
    <property type="term" value="P:protein phosphorylation"/>
    <property type="evidence" value="ECO:0000250"/>
    <property type="project" value="dictyBase"/>
</dbReference>
<dbReference type="GO" id="GO:0043408">
    <property type="term" value="P:regulation of MAPK cascade"/>
    <property type="evidence" value="ECO:0000318"/>
    <property type="project" value="GO_Central"/>
</dbReference>
<dbReference type="GO" id="GO:0007165">
    <property type="term" value="P:signal transduction"/>
    <property type="evidence" value="ECO:0000250"/>
    <property type="project" value="dictyBase"/>
</dbReference>
<dbReference type="CDD" id="cd06612">
    <property type="entry name" value="STKc_MST1_2"/>
    <property type="match status" value="1"/>
</dbReference>
<dbReference type="FunFam" id="1.10.510.10:FF:000966">
    <property type="entry name" value="Serine/threonine-protein kinase 3, putative"/>
    <property type="match status" value="1"/>
</dbReference>
<dbReference type="Gene3D" id="1.10.510.10">
    <property type="entry name" value="Transferase(Phosphotransferase) domain 1"/>
    <property type="match status" value="1"/>
</dbReference>
<dbReference type="InterPro" id="IPR011009">
    <property type="entry name" value="Kinase-like_dom_sf"/>
</dbReference>
<dbReference type="InterPro" id="IPR000719">
    <property type="entry name" value="Prot_kinase_dom"/>
</dbReference>
<dbReference type="InterPro" id="IPR017441">
    <property type="entry name" value="Protein_kinase_ATP_BS"/>
</dbReference>
<dbReference type="InterPro" id="IPR050629">
    <property type="entry name" value="STE20/SPS1-PAK"/>
</dbReference>
<dbReference type="PANTHER" id="PTHR48012:SF2">
    <property type="entry name" value="STERILE20-LIKE KINASE, ISOFORM B"/>
    <property type="match status" value="1"/>
</dbReference>
<dbReference type="PANTHER" id="PTHR48012">
    <property type="entry name" value="STERILE20-LIKE KINASE, ISOFORM B-RELATED"/>
    <property type="match status" value="1"/>
</dbReference>
<dbReference type="Pfam" id="PF00069">
    <property type="entry name" value="Pkinase"/>
    <property type="match status" value="1"/>
</dbReference>
<dbReference type="SMART" id="SM00220">
    <property type="entry name" value="S_TKc"/>
    <property type="match status" value="1"/>
</dbReference>
<dbReference type="SUPFAM" id="SSF56112">
    <property type="entry name" value="Protein kinase-like (PK-like)"/>
    <property type="match status" value="1"/>
</dbReference>
<dbReference type="PROSITE" id="PS00107">
    <property type="entry name" value="PROTEIN_KINASE_ATP"/>
    <property type="match status" value="1"/>
</dbReference>
<dbReference type="PROSITE" id="PS50011">
    <property type="entry name" value="PROTEIN_KINASE_DOM"/>
    <property type="match status" value="1"/>
</dbReference>
<comment type="catalytic activity">
    <reaction evidence="2">
        <text>L-seryl-[protein] + ATP = O-phospho-L-seryl-[protein] + ADP + H(+)</text>
        <dbReference type="Rhea" id="RHEA:17989"/>
        <dbReference type="Rhea" id="RHEA-COMP:9863"/>
        <dbReference type="Rhea" id="RHEA-COMP:11604"/>
        <dbReference type="ChEBI" id="CHEBI:15378"/>
        <dbReference type="ChEBI" id="CHEBI:29999"/>
        <dbReference type="ChEBI" id="CHEBI:30616"/>
        <dbReference type="ChEBI" id="CHEBI:83421"/>
        <dbReference type="ChEBI" id="CHEBI:456216"/>
        <dbReference type="EC" id="2.7.11.1"/>
    </reaction>
</comment>
<comment type="catalytic activity">
    <reaction evidence="2">
        <text>L-threonyl-[protein] + ATP = O-phospho-L-threonyl-[protein] + ADP + H(+)</text>
        <dbReference type="Rhea" id="RHEA:46608"/>
        <dbReference type="Rhea" id="RHEA-COMP:11060"/>
        <dbReference type="Rhea" id="RHEA-COMP:11605"/>
        <dbReference type="ChEBI" id="CHEBI:15378"/>
        <dbReference type="ChEBI" id="CHEBI:30013"/>
        <dbReference type="ChEBI" id="CHEBI:30616"/>
        <dbReference type="ChEBI" id="CHEBI:61977"/>
        <dbReference type="ChEBI" id="CHEBI:456216"/>
        <dbReference type="EC" id="2.7.11.1"/>
    </reaction>
</comment>
<comment type="cofactor">
    <cofactor evidence="1">
        <name>Mg(2+)</name>
        <dbReference type="ChEBI" id="CHEBI:18420"/>
    </cofactor>
</comment>
<comment type="similarity">
    <text evidence="2">Belongs to the protein kinase superfamily. STE Ser/Thr protein kinase family. STE20 subfamily.</text>
</comment>